<comment type="catalytic activity">
    <reaction evidence="1">
        <text>L-histidine = trans-urocanate + NH4(+)</text>
        <dbReference type="Rhea" id="RHEA:21232"/>
        <dbReference type="ChEBI" id="CHEBI:17771"/>
        <dbReference type="ChEBI" id="CHEBI:28938"/>
        <dbReference type="ChEBI" id="CHEBI:57595"/>
        <dbReference type="EC" id="4.3.1.3"/>
    </reaction>
</comment>
<comment type="pathway">
    <text evidence="1">Amino-acid degradation; L-histidine degradation into L-glutamate; N-formimidoyl-L-glutamate from L-histidine: step 1/3.</text>
</comment>
<comment type="subcellular location">
    <subcellularLocation>
        <location evidence="1">Cytoplasm</location>
    </subcellularLocation>
</comment>
<comment type="PTM">
    <text evidence="1">Contains an active site 4-methylidene-imidazol-5-one (MIO), which is formed autocatalytically by cyclization and dehydration of residues Ala-Ser-Gly.</text>
</comment>
<comment type="similarity">
    <text evidence="1">Belongs to the PAL/histidase family.</text>
</comment>
<reference key="1">
    <citation type="journal article" date="2010" name="Genome Biol. Evol.">
        <title>Continuing evolution of Burkholderia mallei through genome reduction and large-scale rearrangements.</title>
        <authorList>
            <person name="Losada L."/>
            <person name="Ronning C.M."/>
            <person name="DeShazer D."/>
            <person name="Woods D."/>
            <person name="Fedorova N."/>
            <person name="Kim H.S."/>
            <person name="Shabalina S.A."/>
            <person name="Pearson T.R."/>
            <person name="Brinkac L."/>
            <person name="Tan P."/>
            <person name="Nandi T."/>
            <person name="Crabtree J."/>
            <person name="Badger J."/>
            <person name="Beckstrom-Sternberg S."/>
            <person name="Saqib M."/>
            <person name="Schutzer S.E."/>
            <person name="Keim P."/>
            <person name="Nierman W.C."/>
        </authorList>
    </citation>
    <scope>NUCLEOTIDE SEQUENCE [LARGE SCALE GENOMIC DNA]</scope>
    <source>
        <strain>NCTC 10229</strain>
    </source>
</reference>
<accession>A2SA96</accession>
<organism>
    <name type="scientific">Burkholderia mallei (strain NCTC 10229)</name>
    <dbReference type="NCBI Taxonomy" id="412022"/>
    <lineage>
        <taxon>Bacteria</taxon>
        <taxon>Pseudomonadati</taxon>
        <taxon>Pseudomonadota</taxon>
        <taxon>Betaproteobacteria</taxon>
        <taxon>Burkholderiales</taxon>
        <taxon>Burkholderiaceae</taxon>
        <taxon>Burkholderia</taxon>
        <taxon>pseudomallei group</taxon>
    </lineage>
</organism>
<protein>
    <recommendedName>
        <fullName evidence="1">Histidine ammonia-lyase</fullName>
        <shortName evidence="1">Histidase</shortName>
        <ecNumber evidence="1">4.3.1.3</ecNumber>
    </recommendedName>
</protein>
<keyword id="KW-0963">Cytoplasm</keyword>
<keyword id="KW-0369">Histidine metabolism</keyword>
<keyword id="KW-0456">Lyase</keyword>
<gene>
    <name evidence="1" type="primary">hutH</name>
    <name type="ordered locus">BMA10229_A2919</name>
</gene>
<proteinExistence type="inferred from homology"/>
<dbReference type="EC" id="4.3.1.3" evidence="1"/>
<dbReference type="EMBL" id="CP000546">
    <property type="protein sequence ID" value="ABN02808.1"/>
    <property type="molecule type" value="Genomic_DNA"/>
</dbReference>
<dbReference type="RefSeq" id="WP_004192520.1">
    <property type="nucleotide sequence ID" value="NC_008836.1"/>
</dbReference>
<dbReference type="SMR" id="A2SA96"/>
<dbReference type="GeneID" id="92978410"/>
<dbReference type="KEGG" id="bml:BMA10229_A2919"/>
<dbReference type="HOGENOM" id="CLU_014801_4_0_4"/>
<dbReference type="UniPathway" id="UPA00379">
    <property type="reaction ID" value="UER00549"/>
</dbReference>
<dbReference type="Proteomes" id="UP000002283">
    <property type="component" value="Chromosome I"/>
</dbReference>
<dbReference type="GO" id="GO:0005737">
    <property type="term" value="C:cytoplasm"/>
    <property type="evidence" value="ECO:0007669"/>
    <property type="project" value="UniProtKB-SubCell"/>
</dbReference>
<dbReference type="GO" id="GO:0004397">
    <property type="term" value="F:histidine ammonia-lyase activity"/>
    <property type="evidence" value="ECO:0007669"/>
    <property type="project" value="UniProtKB-UniRule"/>
</dbReference>
<dbReference type="GO" id="GO:0019556">
    <property type="term" value="P:L-histidine catabolic process to glutamate and formamide"/>
    <property type="evidence" value="ECO:0007669"/>
    <property type="project" value="UniProtKB-UniPathway"/>
</dbReference>
<dbReference type="GO" id="GO:0019557">
    <property type="term" value="P:L-histidine catabolic process to glutamate and formate"/>
    <property type="evidence" value="ECO:0007669"/>
    <property type="project" value="UniProtKB-UniPathway"/>
</dbReference>
<dbReference type="CDD" id="cd00332">
    <property type="entry name" value="PAL-HAL"/>
    <property type="match status" value="1"/>
</dbReference>
<dbReference type="FunFam" id="1.10.275.10:FF:000005">
    <property type="entry name" value="Histidine ammonia-lyase"/>
    <property type="match status" value="1"/>
</dbReference>
<dbReference type="FunFam" id="1.20.200.10:FF:000003">
    <property type="entry name" value="Histidine ammonia-lyase"/>
    <property type="match status" value="1"/>
</dbReference>
<dbReference type="Gene3D" id="1.20.200.10">
    <property type="entry name" value="Fumarase/aspartase (Central domain)"/>
    <property type="match status" value="1"/>
</dbReference>
<dbReference type="Gene3D" id="1.10.275.10">
    <property type="entry name" value="Fumarase/aspartase (N-terminal domain)"/>
    <property type="match status" value="1"/>
</dbReference>
<dbReference type="HAMAP" id="MF_00229">
    <property type="entry name" value="His_ammonia_lyase"/>
    <property type="match status" value="1"/>
</dbReference>
<dbReference type="InterPro" id="IPR001106">
    <property type="entry name" value="Aromatic_Lyase"/>
</dbReference>
<dbReference type="InterPro" id="IPR024083">
    <property type="entry name" value="Fumarase/histidase_N"/>
</dbReference>
<dbReference type="InterPro" id="IPR005921">
    <property type="entry name" value="HutH"/>
</dbReference>
<dbReference type="InterPro" id="IPR008948">
    <property type="entry name" value="L-Aspartase-like"/>
</dbReference>
<dbReference type="InterPro" id="IPR022313">
    <property type="entry name" value="Phe/His_NH3-lyase_AS"/>
</dbReference>
<dbReference type="NCBIfam" id="TIGR01225">
    <property type="entry name" value="hutH"/>
    <property type="match status" value="1"/>
</dbReference>
<dbReference type="NCBIfam" id="NF006871">
    <property type="entry name" value="PRK09367.1"/>
    <property type="match status" value="1"/>
</dbReference>
<dbReference type="PANTHER" id="PTHR10362">
    <property type="entry name" value="HISTIDINE AMMONIA-LYASE"/>
    <property type="match status" value="1"/>
</dbReference>
<dbReference type="Pfam" id="PF00221">
    <property type="entry name" value="Lyase_aromatic"/>
    <property type="match status" value="1"/>
</dbReference>
<dbReference type="SUPFAM" id="SSF48557">
    <property type="entry name" value="L-aspartase-like"/>
    <property type="match status" value="1"/>
</dbReference>
<dbReference type="PROSITE" id="PS00488">
    <property type="entry name" value="PAL_HISTIDASE"/>
    <property type="match status" value="1"/>
</dbReference>
<name>HUTH_BURM9</name>
<sequence>MITLTPGRLTLPQLRRIARENVQIALDPASFAAIDRGAQAVADIAAKGEPAYGINTGFGRLASTHIPHDQLELLQKNLVLSHAVGVGEPMARPVVRLLMALKLSSLGRGHSGIRRVVMDALVTLFNADVLPLIPVKGSVGASGDLAPLAHMSAVLLGIGDVFIRGERASAAEGLRVAGLAPLTLEAKEGLALLNGTQASTALALDNLFAIEDLYRTALVSGALSVDAAAGSVKPFDARIHELRGHRGQIDAAAAYRSLLDGSAINVSHRDCDKVQDPYSLRCQPQVMGACLDQIRHAAGVLLIEANAVSDNPLIFPDTGEVLSGGNFHAEPVAFAADNLAIAAAEIGALAERRIALLIDATLSGLPPFLVKDGGVNSGFMIAHVTAAALASENKTLAHPASVDSLPTSANQEDHVSMATFAARKLTDIAENVANILAIELLAAAQGVDLRAPHATSPALQHAMKTIRADVAHYDLDHYFAPDIAVVARRVRERAFATLSPLSFESEQ</sequence>
<evidence type="ECO:0000255" key="1">
    <source>
        <dbReference type="HAMAP-Rule" id="MF_00229"/>
    </source>
</evidence>
<feature type="chain" id="PRO_1000021551" description="Histidine ammonia-lyase">
    <location>
        <begin position="1"/>
        <end position="507"/>
    </location>
</feature>
<feature type="modified residue" description="2,3-didehydroalanine (Ser)" evidence="1">
    <location>
        <position position="142"/>
    </location>
</feature>
<feature type="cross-link" description="5-imidazolinone (Ala-Gly)" evidence="1">
    <location>
        <begin position="141"/>
        <end position="143"/>
    </location>
</feature>